<proteinExistence type="inferred from homology"/>
<reference key="1">
    <citation type="journal article" date="2005" name="Proc. Natl. Acad. Sci. U.S.A.">
        <title>Whole genome sequence of Staphylococcus saprophyticus reveals the pathogenesis of uncomplicated urinary tract infection.</title>
        <authorList>
            <person name="Kuroda M."/>
            <person name="Yamashita A."/>
            <person name="Hirakawa H."/>
            <person name="Kumano M."/>
            <person name="Morikawa K."/>
            <person name="Higashide M."/>
            <person name="Maruyama A."/>
            <person name="Inose Y."/>
            <person name="Matoba K."/>
            <person name="Toh H."/>
            <person name="Kuhara S."/>
            <person name="Hattori M."/>
            <person name="Ohta T."/>
        </authorList>
    </citation>
    <scope>NUCLEOTIDE SEQUENCE [LARGE SCALE GENOMIC DNA]</scope>
    <source>
        <strain>ATCC 15305 / DSM 20229 / NCIMB 8711 / NCTC 7292 / S-41</strain>
    </source>
</reference>
<protein>
    <recommendedName>
        <fullName evidence="1">Undecaprenyl-diphosphatase</fullName>
        <ecNumber evidence="1">3.6.1.27</ecNumber>
    </recommendedName>
    <alternativeName>
        <fullName evidence="1">Bacitracin resistance protein</fullName>
    </alternativeName>
    <alternativeName>
        <fullName evidence="1">Undecaprenyl pyrophosphate phosphatase</fullName>
    </alternativeName>
</protein>
<evidence type="ECO:0000255" key="1">
    <source>
        <dbReference type="HAMAP-Rule" id="MF_01006"/>
    </source>
</evidence>
<accession>Q49VN0</accession>
<organism>
    <name type="scientific">Staphylococcus saprophyticus subsp. saprophyticus (strain ATCC 15305 / DSM 20229 / NCIMB 8711 / NCTC 7292 / S-41)</name>
    <dbReference type="NCBI Taxonomy" id="342451"/>
    <lineage>
        <taxon>Bacteria</taxon>
        <taxon>Bacillati</taxon>
        <taxon>Bacillota</taxon>
        <taxon>Bacilli</taxon>
        <taxon>Bacillales</taxon>
        <taxon>Staphylococcaceae</taxon>
        <taxon>Staphylococcus</taxon>
    </lineage>
</organism>
<keyword id="KW-0046">Antibiotic resistance</keyword>
<keyword id="KW-1003">Cell membrane</keyword>
<keyword id="KW-0133">Cell shape</keyword>
<keyword id="KW-0961">Cell wall biogenesis/degradation</keyword>
<keyword id="KW-0378">Hydrolase</keyword>
<keyword id="KW-0472">Membrane</keyword>
<keyword id="KW-0573">Peptidoglycan synthesis</keyword>
<keyword id="KW-1185">Reference proteome</keyword>
<keyword id="KW-0812">Transmembrane</keyword>
<keyword id="KW-1133">Transmembrane helix</keyword>
<name>UPPP_STAS1</name>
<dbReference type="EC" id="3.6.1.27" evidence="1"/>
<dbReference type="EMBL" id="AP008934">
    <property type="protein sequence ID" value="BAE19180.1"/>
    <property type="molecule type" value="Genomic_DNA"/>
</dbReference>
<dbReference type="RefSeq" id="WP_002483975.1">
    <property type="nucleotide sequence ID" value="NZ_MTGA01000039.1"/>
</dbReference>
<dbReference type="SMR" id="Q49VN0"/>
<dbReference type="KEGG" id="ssp:SSP2035"/>
<dbReference type="eggNOG" id="COG1968">
    <property type="taxonomic scope" value="Bacteria"/>
</dbReference>
<dbReference type="HOGENOM" id="CLU_060296_2_0_9"/>
<dbReference type="OrthoDB" id="9808289at2"/>
<dbReference type="Proteomes" id="UP000006371">
    <property type="component" value="Chromosome"/>
</dbReference>
<dbReference type="GO" id="GO:0005886">
    <property type="term" value="C:plasma membrane"/>
    <property type="evidence" value="ECO:0007669"/>
    <property type="project" value="UniProtKB-SubCell"/>
</dbReference>
<dbReference type="GO" id="GO:0050380">
    <property type="term" value="F:undecaprenyl-diphosphatase activity"/>
    <property type="evidence" value="ECO:0007669"/>
    <property type="project" value="UniProtKB-UniRule"/>
</dbReference>
<dbReference type="GO" id="GO:0071555">
    <property type="term" value="P:cell wall organization"/>
    <property type="evidence" value="ECO:0007669"/>
    <property type="project" value="UniProtKB-KW"/>
</dbReference>
<dbReference type="GO" id="GO:0009252">
    <property type="term" value="P:peptidoglycan biosynthetic process"/>
    <property type="evidence" value="ECO:0007669"/>
    <property type="project" value="UniProtKB-KW"/>
</dbReference>
<dbReference type="GO" id="GO:0008360">
    <property type="term" value="P:regulation of cell shape"/>
    <property type="evidence" value="ECO:0007669"/>
    <property type="project" value="UniProtKB-KW"/>
</dbReference>
<dbReference type="GO" id="GO:0046677">
    <property type="term" value="P:response to antibiotic"/>
    <property type="evidence" value="ECO:0007669"/>
    <property type="project" value="UniProtKB-UniRule"/>
</dbReference>
<dbReference type="HAMAP" id="MF_01006">
    <property type="entry name" value="Undec_diphosphatase"/>
    <property type="match status" value="1"/>
</dbReference>
<dbReference type="InterPro" id="IPR003824">
    <property type="entry name" value="UppP"/>
</dbReference>
<dbReference type="NCBIfam" id="NF001390">
    <property type="entry name" value="PRK00281.1-4"/>
    <property type="match status" value="1"/>
</dbReference>
<dbReference type="NCBIfam" id="TIGR00753">
    <property type="entry name" value="undec_PP_bacA"/>
    <property type="match status" value="1"/>
</dbReference>
<dbReference type="PANTHER" id="PTHR30622">
    <property type="entry name" value="UNDECAPRENYL-DIPHOSPHATASE"/>
    <property type="match status" value="1"/>
</dbReference>
<dbReference type="PANTHER" id="PTHR30622:SF3">
    <property type="entry name" value="UNDECAPRENYL-DIPHOSPHATASE"/>
    <property type="match status" value="1"/>
</dbReference>
<dbReference type="Pfam" id="PF02673">
    <property type="entry name" value="BacA"/>
    <property type="match status" value="1"/>
</dbReference>
<feature type="chain" id="PRO_0000227641" description="Undecaprenyl-diphosphatase">
    <location>
        <begin position="1"/>
        <end position="291"/>
    </location>
</feature>
<feature type="transmembrane region" description="Helical" evidence="1">
    <location>
        <begin position="1"/>
        <end position="21"/>
    </location>
</feature>
<feature type="transmembrane region" description="Helical" evidence="1">
    <location>
        <begin position="48"/>
        <end position="68"/>
    </location>
</feature>
<feature type="transmembrane region" description="Helical" evidence="1">
    <location>
        <begin position="99"/>
        <end position="119"/>
    </location>
</feature>
<feature type="transmembrane region" description="Helical" evidence="1">
    <location>
        <begin position="123"/>
        <end position="143"/>
    </location>
</feature>
<feature type="transmembrane region" description="Helical" evidence="1">
    <location>
        <begin position="159"/>
        <end position="179"/>
    </location>
</feature>
<feature type="transmembrane region" description="Helical" evidence="1">
    <location>
        <begin position="200"/>
        <end position="220"/>
    </location>
</feature>
<feature type="transmembrane region" description="Helical" evidence="1">
    <location>
        <begin position="236"/>
        <end position="256"/>
    </location>
</feature>
<feature type="transmembrane region" description="Helical" evidence="1">
    <location>
        <begin position="269"/>
        <end position="289"/>
    </location>
</feature>
<sequence>MLILELIKGIILGIVEGLTEFAPVSSTGHMILVDDMWLKSSEFLGSQSAFTFKIVIQLGSVFAGAWVFRERYFEMLHIGKYRHEPIDGIGQKPKRLNLLHIIVGMIPAGVLGLLFDDVIQEYLFSVPTVMIGLFIGAIYMIIADIYSKKVTNPRNVDQINYFQAFVIGLSQAIAMWPGFSRSGSTISTGVLMKMNHKSASDFTFIMAVPVMLAASGLSLVKNMEYIHMSDIGFYVLGFLAAFIVGLIAIKTFLYLISKIKLIPFAIYRIVLVIIIAILYFGFGIGQGITGE</sequence>
<gene>
    <name evidence="1" type="primary">uppP</name>
    <name type="ordered locus">SSP2035</name>
</gene>
<comment type="function">
    <text evidence="1">Catalyzes the dephosphorylation of undecaprenyl diphosphate (UPP). Confers resistance to bacitracin.</text>
</comment>
<comment type="catalytic activity">
    <reaction evidence="1">
        <text>di-trans,octa-cis-undecaprenyl diphosphate + H2O = di-trans,octa-cis-undecaprenyl phosphate + phosphate + H(+)</text>
        <dbReference type="Rhea" id="RHEA:28094"/>
        <dbReference type="ChEBI" id="CHEBI:15377"/>
        <dbReference type="ChEBI" id="CHEBI:15378"/>
        <dbReference type="ChEBI" id="CHEBI:43474"/>
        <dbReference type="ChEBI" id="CHEBI:58405"/>
        <dbReference type="ChEBI" id="CHEBI:60392"/>
        <dbReference type="EC" id="3.6.1.27"/>
    </reaction>
</comment>
<comment type="subcellular location">
    <subcellularLocation>
        <location evidence="1">Cell membrane</location>
        <topology evidence="1">Multi-pass membrane protein</topology>
    </subcellularLocation>
</comment>
<comment type="miscellaneous">
    <text>Bacitracin is thought to be involved in the inhibition of peptidoglycan synthesis by sequestering undecaprenyl diphosphate, thereby reducing the pool of lipid carrier available.</text>
</comment>
<comment type="similarity">
    <text evidence="1">Belongs to the UppP family.</text>
</comment>